<comment type="similarity">
    <text evidence="1">Belongs to the bacterial ribosomal protein bS16 family.</text>
</comment>
<evidence type="ECO:0000255" key="1">
    <source>
        <dbReference type="HAMAP-Rule" id="MF_00385"/>
    </source>
</evidence>
<evidence type="ECO:0000305" key="2"/>
<organism>
    <name type="scientific">Vesicomyosocius okutanii subsp. Calyptogena okutanii (strain HA)</name>
    <dbReference type="NCBI Taxonomy" id="412965"/>
    <lineage>
        <taxon>Bacteria</taxon>
        <taxon>Pseudomonadati</taxon>
        <taxon>Pseudomonadota</taxon>
        <taxon>Gammaproteobacteria</taxon>
        <taxon>Candidatus Pseudothioglobaceae</taxon>
        <taxon>Candidatus Vesicomyosocius</taxon>
    </lineage>
</organism>
<proteinExistence type="inferred from homology"/>
<feature type="chain" id="PRO_1000049375" description="Small ribosomal subunit protein bS16">
    <location>
        <begin position="1"/>
        <end position="96"/>
    </location>
</feature>
<accession>A5CVN0</accession>
<keyword id="KW-1185">Reference proteome</keyword>
<keyword id="KW-0687">Ribonucleoprotein</keyword>
<keyword id="KW-0689">Ribosomal protein</keyword>
<sequence>MVKIRLARGGAKKKPFYSIVATDSRRRRDSAYIERLGYFNPVTHGQEVRLIIEEARLAYWTSKGAQISDRVKQLVKEFKDPLIRERDIAVKSAKNL</sequence>
<protein>
    <recommendedName>
        <fullName evidence="1">Small ribosomal subunit protein bS16</fullName>
    </recommendedName>
    <alternativeName>
        <fullName evidence="2">30S ribosomal protein S16</fullName>
    </alternativeName>
</protein>
<reference key="1">
    <citation type="journal article" date="2007" name="Curr. Biol.">
        <title>Reduced genome of the thioautotrophic intracellular symbiont in a deep-sea clam, Calyptogena okutanii.</title>
        <authorList>
            <person name="Kuwahara H."/>
            <person name="Yoshida T."/>
            <person name="Takaki Y."/>
            <person name="Shimamura S."/>
            <person name="Nishi S."/>
            <person name="Harada M."/>
            <person name="Matsuyama K."/>
            <person name="Takishita K."/>
            <person name="Kawato M."/>
            <person name="Uematsu K."/>
            <person name="Fujiwara Y."/>
            <person name="Sato T."/>
            <person name="Kato C."/>
            <person name="Kitagawa M."/>
            <person name="Kato I."/>
            <person name="Maruyama T."/>
        </authorList>
    </citation>
    <scope>NUCLEOTIDE SEQUENCE [LARGE SCALE GENOMIC DNA]</scope>
    <source>
        <strain>HA</strain>
    </source>
</reference>
<gene>
    <name evidence="1" type="primary">rpsP</name>
    <name type="ordered locus">COSY_0885</name>
</gene>
<dbReference type="EMBL" id="AP009247">
    <property type="protein sequence ID" value="BAF61990.1"/>
    <property type="molecule type" value="Genomic_DNA"/>
</dbReference>
<dbReference type="RefSeq" id="WP_011930259.1">
    <property type="nucleotide sequence ID" value="NC_009465.1"/>
</dbReference>
<dbReference type="SMR" id="A5CVN0"/>
<dbReference type="STRING" id="412965.COSY_0885"/>
<dbReference type="KEGG" id="vok:COSY_0885"/>
<dbReference type="eggNOG" id="COG0228">
    <property type="taxonomic scope" value="Bacteria"/>
</dbReference>
<dbReference type="HOGENOM" id="CLU_100590_5_1_6"/>
<dbReference type="OrthoDB" id="9807878at2"/>
<dbReference type="Proteomes" id="UP000000247">
    <property type="component" value="Chromosome"/>
</dbReference>
<dbReference type="GO" id="GO:0005737">
    <property type="term" value="C:cytoplasm"/>
    <property type="evidence" value="ECO:0007669"/>
    <property type="project" value="UniProtKB-ARBA"/>
</dbReference>
<dbReference type="GO" id="GO:0015935">
    <property type="term" value="C:small ribosomal subunit"/>
    <property type="evidence" value="ECO:0007669"/>
    <property type="project" value="TreeGrafter"/>
</dbReference>
<dbReference type="GO" id="GO:0003735">
    <property type="term" value="F:structural constituent of ribosome"/>
    <property type="evidence" value="ECO:0007669"/>
    <property type="project" value="InterPro"/>
</dbReference>
<dbReference type="GO" id="GO:0006412">
    <property type="term" value="P:translation"/>
    <property type="evidence" value="ECO:0007669"/>
    <property type="project" value="UniProtKB-UniRule"/>
</dbReference>
<dbReference type="Gene3D" id="3.30.1320.10">
    <property type="match status" value="1"/>
</dbReference>
<dbReference type="HAMAP" id="MF_00385">
    <property type="entry name" value="Ribosomal_bS16"/>
    <property type="match status" value="1"/>
</dbReference>
<dbReference type="InterPro" id="IPR000307">
    <property type="entry name" value="Ribosomal_bS16"/>
</dbReference>
<dbReference type="InterPro" id="IPR020592">
    <property type="entry name" value="Ribosomal_bS16_CS"/>
</dbReference>
<dbReference type="InterPro" id="IPR023803">
    <property type="entry name" value="Ribosomal_bS16_dom_sf"/>
</dbReference>
<dbReference type="NCBIfam" id="TIGR00002">
    <property type="entry name" value="S16"/>
    <property type="match status" value="1"/>
</dbReference>
<dbReference type="PANTHER" id="PTHR12919">
    <property type="entry name" value="30S RIBOSOMAL PROTEIN S16"/>
    <property type="match status" value="1"/>
</dbReference>
<dbReference type="PANTHER" id="PTHR12919:SF20">
    <property type="entry name" value="SMALL RIBOSOMAL SUBUNIT PROTEIN BS16M"/>
    <property type="match status" value="1"/>
</dbReference>
<dbReference type="Pfam" id="PF00886">
    <property type="entry name" value="Ribosomal_S16"/>
    <property type="match status" value="1"/>
</dbReference>
<dbReference type="SUPFAM" id="SSF54565">
    <property type="entry name" value="Ribosomal protein S16"/>
    <property type="match status" value="1"/>
</dbReference>
<dbReference type="PROSITE" id="PS00732">
    <property type="entry name" value="RIBOSOMAL_S16"/>
    <property type="match status" value="1"/>
</dbReference>
<name>RS16_VESOH</name>